<keyword id="KW-0002">3D-structure</keyword>
<keyword id="KW-0025">Alternative splicing</keyword>
<keyword id="KW-0966">Cell projection</keyword>
<keyword id="KW-0969">Cilium</keyword>
<keyword id="KW-0963">Cytoplasm</keyword>
<keyword id="KW-0206">Cytoskeleton</keyword>
<keyword id="KW-0282">Flagellum</keyword>
<keyword id="KW-1267">Proteomics identification</keyword>
<keyword id="KW-1185">Reference proteome</keyword>
<keyword id="KW-0677">Repeat</keyword>
<feature type="chain" id="PRO_0000253544" description="Dynein regulatory complex protein 8">
    <location>
        <begin position="1"/>
        <end position="269"/>
    </location>
</feature>
<feature type="domain" description="EF-hand 1" evidence="2">
    <location>
        <begin position="150"/>
        <end position="185"/>
    </location>
</feature>
<feature type="domain" description="EF-hand 2" evidence="2">
    <location>
        <begin position="228"/>
        <end position="263"/>
    </location>
</feature>
<feature type="region of interest" description="Disordered" evidence="3">
    <location>
        <begin position="1"/>
        <end position="113"/>
    </location>
</feature>
<feature type="compositionally biased region" description="Low complexity" evidence="3">
    <location>
        <begin position="54"/>
        <end position="76"/>
    </location>
</feature>
<feature type="splice variant" id="VSP_021055" description="In isoform 2." evidence="5">
    <location>
        <begin position="1"/>
        <end position="136"/>
    </location>
</feature>
<feature type="splice variant" id="VSP_043273" description="In isoform 3." evidence="4">
    <original>MLGPGQVR</original>
    <variation>MADEKDRE</variation>
    <location>
        <begin position="1"/>
        <end position="8"/>
    </location>
</feature>
<feature type="splice variant" id="VSP_043274" description="In isoform 3." evidence="4">
    <location>
        <begin position="9"/>
        <end position="144"/>
    </location>
</feature>
<feature type="splice variant" id="VSP_021056" description="In isoform 2." evidence="5">
    <original>MTVLWGTQ</original>
    <variation>MADEKDRE</variation>
    <location>
        <begin position="137"/>
        <end position="144"/>
    </location>
</feature>
<feature type="splice variant" id="VSP_021057" description="In isoform 2." evidence="5">
    <original>DGVSLRRPG</original>
    <variation>GEPFSQEEMEEMLSAAIDPESNSINYKDYITMMVIDEN</variation>
    <location>
        <begin position="261"/>
        <end position="269"/>
    </location>
</feature>
<feature type="sequence conflict" description="In Ref. 1; AK090927." evidence="6" ref="1">
    <original>T</original>
    <variation>A</variation>
    <location>
        <position position="39"/>
    </location>
</feature>
<proteinExistence type="evidence at protein level"/>
<sequence length="269" mass="29714">MLGPGQVRLRPRVWRDKAGGRVADGASGLPPARGSWRETGTGRALGASSPPRPAQGSSSPGIQSGPSSRPGSPRGAEQAGTPRPRLSLGISQATGSAARWRTRRTGKGLGYNSDEIRPRTLLIEHLMEGGRRDHHTMTVLWGTQEIIVAEFHKKIKEAFEVFDHESNNTVDVREIGTIIRSLGCCPTEGELHDLIAEVEEEEPTGYIRFEKFLPVMTEILLERKYRPIPEDVLLRAFEVLDSAKRGFLTKDELIKYMTEEDGVSLRRPG</sequence>
<reference key="1">
    <citation type="journal article" date="2004" name="Nat. Genet.">
        <title>Complete sequencing and characterization of 21,243 full-length human cDNAs.</title>
        <authorList>
            <person name="Ota T."/>
            <person name="Suzuki Y."/>
            <person name="Nishikawa T."/>
            <person name="Otsuki T."/>
            <person name="Sugiyama T."/>
            <person name="Irie R."/>
            <person name="Wakamatsu A."/>
            <person name="Hayashi K."/>
            <person name="Sato H."/>
            <person name="Nagai K."/>
            <person name="Kimura K."/>
            <person name="Makita H."/>
            <person name="Sekine M."/>
            <person name="Obayashi M."/>
            <person name="Nishi T."/>
            <person name="Shibahara T."/>
            <person name="Tanaka T."/>
            <person name="Ishii S."/>
            <person name="Yamamoto J."/>
            <person name="Saito K."/>
            <person name="Kawai Y."/>
            <person name="Isono Y."/>
            <person name="Nakamura Y."/>
            <person name="Nagahari K."/>
            <person name="Murakami K."/>
            <person name="Yasuda T."/>
            <person name="Iwayanagi T."/>
            <person name="Wagatsuma M."/>
            <person name="Shiratori A."/>
            <person name="Sudo H."/>
            <person name="Hosoiri T."/>
            <person name="Kaku Y."/>
            <person name="Kodaira H."/>
            <person name="Kondo H."/>
            <person name="Sugawara M."/>
            <person name="Takahashi M."/>
            <person name="Kanda K."/>
            <person name="Yokoi T."/>
            <person name="Furuya T."/>
            <person name="Kikkawa E."/>
            <person name="Omura Y."/>
            <person name="Abe K."/>
            <person name="Kamihara K."/>
            <person name="Katsuta N."/>
            <person name="Sato K."/>
            <person name="Tanikawa M."/>
            <person name="Yamazaki M."/>
            <person name="Ninomiya K."/>
            <person name="Ishibashi T."/>
            <person name="Yamashita H."/>
            <person name="Murakawa K."/>
            <person name="Fujimori K."/>
            <person name="Tanai H."/>
            <person name="Kimata M."/>
            <person name="Watanabe M."/>
            <person name="Hiraoka S."/>
            <person name="Chiba Y."/>
            <person name="Ishida S."/>
            <person name="Ono Y."/>
            <person name="Takiguchi S."/>
            <person name="Watanabe S."/>
            <person name="Yosida M."/>
            <person name="Hotuta T."/>
            <person name="Kusano J."/>
            <person name="Kanehori K."/>
            <person name="Takahashi-Fujii A."/>
            <person name="Hara H."/>
            <person name="Tanase T.-O."/>
            <person name="Nomura Y."/>
            <person name="Togiya S."/>
            <person name="Komai F."/>
            <person name="Hara R."/>
            <person name="Takeuchi K."/>
            <person name="Arita M."/>
            <person name="Imose N."/>
            <person name="Musashino K."/>
            <person name="Yuuki H."/>
            <person name="Oshima A."/>
            <person name="Sasaki N."/>
            <person name="Aotsuka S."/>
            <person name="Yoshikawa Y."/>
            <person name="Matsunawa H."/>
            <person name="Ichihara T."/>
            <person name="Shiohata N."/>
            <person name="Sano S."/>
            <person name="Moriya S."/>
            <person name="Momiyama H."/>
            <person name="Satoh N."/>
            <person name="Takami S."/>
            <person name="Terashima Y."/>
            <person name="Suzuki O."/>
            <person name="Nakagawa S."/>
            <person name="Senoh A."/>
            <person name="Mizoguchi H."/>
            <person name="Goto Y."/>
            <person name="Shimizu F."/>
            <person name="Wakebe H."/>
            <person name="Hishigaki H."/>
            <person name="Watanabe T."/>
            <person name="Sugiyama A."/>
            <person name="Takemoto M."/>
            <person name="Kawakami B."/>
            <person name="Yamazaki M."/>
            <person name="Watanabe K."/>
            <person name="Kumagai A."/>
            <person name="Itakura S."/>
            <person name="Fukuzumi Y."/>
            <person name="Fujimori Y."/>
            <person name="Komiyama M."/>
            <person name="Tashiro H."/>
            <person name="Tanigami A."/>
            <person name="Fujiwara T."/>
            <person name="Ono T."/>
            <person name="Yamada K."/>
            <person name="Fujii Y."/>
            <person name="Ozaki K."/>
            <person name="Hirao M."/>
            <person name="Ohmori Y."/>
            <person name="Kawabata A."/>
            <person name="Hikiji T."/>
            <person name="Kobatake N."/>
            <person name="Inagaki H."/>
            <person name="Ikema Y."/>
            <person name="Okamoto S."/>
            <person name="Okitani R."/>
            <person name="Kawakami T."/>
            <person name="Noguchi S."/>
            <person name="Itoh T."/>
            <person name="Shigeta K."/>
            <person name="Senba T."/>
            <person name="Matsumura K."/>
            <person name="Nakajima Y."/>
            <person name="Mizuno T."/>
            <person name="Morinaga M."/>
            <person name="Sasaki M."/>
            <person name="Togashi T."/>
            <person name="Oyama M."/>
            <person name="Hata H."/>
            <person name="Watanabe M."/>
            <person name="Komatsu T."/>
            <person name="Mizushima-Sugano J."/>
            <person name="Satoh T."/>
            <person name="Shirai Y."/>
            <person name="Takahashi Y."/>
            <person name="Nakagawa K."/>
            <person name="Okumura K."/>
            <person name="Nagase T."/>
            <person name="Nomura N."/>
            <person name="Kikuchi H."/>
            <person name="Masuho Y."/>
            <person name="Yamashita R."/>
            <person name="Nakai K."/>
            <person name="Yada T."/>
            <person name="Nakamura Y."/>
            <person name="Ohara O."/>
            <person name="Isogai T."/>
            <person name="Sugano S."/>
        </authorList>
    </citation>
    <scope>NUCLEOTIDE SEQUENCE [LARGE SCALE MRNA] (ISOFORMS 1 AND 3)</scope>
    <source>
        <tissue>Amygdala</tissue>
        <tissue>Testis</tissue>
    </source>
</reference>
<reference key="2">
    <citation type="journal article" date="2006" name="Nature">
        <title>The DNA sequence and biological annotation of human chromosome 1.</title>
        <authorList>
            <person name="Gregory S.G."/>
            <person name="Barlow K.F."/>
            <person name="McLay K.E."/>
            <person name="Kaul R."/>
            <person name="Swarbreck D."/>
            <person name="Dunham A."/>
            <person name="Scott C.E."/>
            <person name="Howe K.L."/>
            <person name="Woodfine K."/>
            <person name="Spencer C.C.A."/>
            <person name="Jones M.C."/>
            <person name="Gillson C."/>
            <person name="Searle S."/>
            <person name="Zhou Y."/>
            <person name="Kokocinski F."/>
            <person name="McDonald L."/>
            <person name="Evans R."/>
            <person name="Phillips K."/>
            <person name="Atkinson A."/>
            <person name="Cooper R."/>
            <person name="Jones C."/>
            <person name="Hall R.E."/>
            <person name="Andrews T.D."/>
            <person name="Lloyd C."/>
            <person name="Ainscough R."/>
            <person name="Almeida J.P."/>
            <person name="Ambrose K.D."/>
            <person name="Anderson F."/>
            <person name="Andrew R.W."/>
            <person name="Ashwell R.I.S."/>
            <person name="Aubin K."/>
            <person name="Babbage A.K."/>
            <person name="Bagguley C.L."/>
            <person name="Bailey J."/>
            <person name="Beasley H."/>
            <person name="Bethel G."/>
            <person name="Bird C.P."/>
            <person name="Bray-Allen S."/>
            <person name="Brown J.Y."/>
            <person name="Brown A.J."/>
            <person name="Buckley D."/>
            <person name="Burton J."/>
            <person name="Bye J."/>
            <person name="Carder C."/>
            <person name="Chapman J.C."/>
            <person name="Clark S.Y."/>
            <person name="Clarke G."/>
            <person name="Clee C."/>
            <person name="Cobley V."/>
            <person name="Collier R.E."/>
            <person name="Corby N."/>
            <person name="Coville G.J."/>
            <person name="Davies J."/>
            <person name="Deadman R."/>
            <person name="Dunn M."/>
            <person name="Earthrowl M."/>
            <person name="Ellington A.G."/>
            <person name="Errington H."/>
            <person name="Frankish A."/>
            <person name="Frankland J."/>
            <person name="French L."/>
            <person name="Garner P."/>
            <person name="Garnett J."/>
            <person name="Gay L."/>
            <person name="Ghori M.R.J."/>
            <person name="Gibson R."/>
            <person name="Gilby L.M."/>
            <person name="Gillett W."/>
            <person name="Glithero R.J."/>
            <person name="Grafham D.V."/>
            <person name="Griffiths C."/>
            <person name="Griffiths-Jones S."/>
            <person name="Grocock R."/>
            <person name="Hammond S."/>
            <person name="Harrison E.S.I."/>
            <person name="Hart E."/>
            <person name="Haugen E."/>
            <person name="Heath P.D."/>
            <person name="Holmes S."/>
            <person name="Holt K."/>
            <person name="Howden P.J."/>
            <person name="Hunt A.R."/>
            <person name="Hunt S.E."/>
            <person name="Hunter G."/>
            <person name="Isherwood J."/>
            <person name="James R."/>
            <person name="Johnson C."/>
            <person name="Johnson D."/>
            <person name="Joy A."/>
            <person name="Kay M."/>
            <person name="Kershaw J.K."/>
            <person name="Kibukawa M."/>
            <person name="Kimberley A.M."/>
            <person name="King A."/>
            <person name="Knights A.J."/>
            <person name="Lad H."/>
            <person name="Laird G."/>
            <person name="Lawlor S."/>
            <person name="Leongamornlert D.A."/>
            <person name="Lloyd D.M."/>
            <person name="Loveland J."/>
            <person name="Lovell J."/>
            <person name="Lush M.J."/>
            <person name="Lyne R."/>
            <person name="Martin S."/>
            <person name="Mashreghi-Mohammadi M."/>
            <person name="Matthews L."/>
            <person name="Matthews N.S.W."/>
            <person name="McLaren S."/>
            <person name="Milne S."/>
            <person name="Mistry S."/>
            <person name="Moore M.J.F."/>
            <person name="Nickerson T."/>
            <person name="O'Dell C.N."/>
            <person name="Oliver K."/>
            <person name="Palmeiri A."/>
            <person name="Palmer S.A."/>
            <person name="Parker A."/>
            <person name="Patel D."/>
            <person name="Pearce A.V."/>
            <person name="Peck A.I."/>
            <person name="Pelan S."/>
            <person name="Phelps K."/>
            <person name="Phillimore B.J."/>
            <person name="Plumb R."/>
            <person name="Rajan J."/>
            <person name="Raymond C."/>
            <person name="Rouse G."/>
            <person name="Saenphimmachak C."/>
            <person name="Sehra H.K."/>
            <person name="Sheridan E."/>
            <person name="Shownkeen R."/>
            <person name="Sims S."/>
            <person name="Skuce C.D."/>
            <person name="Smith M."/>
            <person name="Steward C."/>
            <person name="Subramanian S."/>
            <person name="Sycamore N."/>
            <person name="Tracey A."/>
            <person name="Tromans A."/>
            <person name="Van Helmond Z."/>
            <person name="Wall M."/>
            <person name="Wallis J.M."/>
            <person name="White S."/>
            <person name="Whitehead S.L."/>
            <person name="Wilkinson J.E."/>
            <person name="Willey D.L."/>
            <person name="Williams H."/>
            <person name="Wilming L."/>
            <person name="Wray P.W."/>
            <person name="Wu Z."/>
            <person name="Coulson A."/>
            <person name="Vaudin M."/>
            <person name="Sulston J.E."/>
            <person name="Durbin R.M."/>
            <person name="Hubbard T."/>
            <person name="Wooster R."/>
            <person name="Dunham I."/>
            <person name="Carter N.P."/>
            <person name="McVean G."/>
            <person name="Ross M.T."/>
            <person name="Harrow J."/>
            <person name="Olson M.V."/>
            <person name="Beck S."/>
            <person name="Rogers J."/>
            <person name="Bentley D.R."/>
        </authorList>
    </citation>
    <scope>NUCLEOTIDE SEQUENCE [LARGE SCALE GENOMIC DNA]</scope>
</reference>
<reference key="3">
    <citation type="journal article" date="2004" name="Genome Res.">
        <title>The status, quality, and expansion of the NIH full-length cDNA project: the Mammalian Gene Collection (MGC).</title>
        <authorList>
            <consortium name="The MGC Project Team"/>
        </authorList>
    </citation>
    <scope>NUCLEOTIDE SEQUENCE [LARGE SCALE MRNA] (ISOFORM 2)</scope>
    <source>
        <tissue>Urinary bladder</tissue>
    </source>
</reference>
<reference key="4">
    <citation type="submission" date="2005-03" db="EMBL/GenBank/DDBJ databases">
        <authorList>
            <person name="Totoki Y."/>
            <person name="Toyoda A."/>
            <person name="Takeda T."/>
            <person name="Sakaki Y."/>
            <person name="Tanaka A."/>
            <person name="Yokoyama S."/>
            <person name="Ohara O."/>
            <person name="Nagase T."/>
            <person name="Kikuno R.F."/>
        </authorList>
    </citation>
    <scope>NUCLEOTIDE SEQUENCE [LARGE SCALE MRNA] OF 105-269 (ISOFORM 1)</scope>
    <source>
        <tissue>Brain</tissue>
    </source>
</reference>
<gene>
    <name type="primary">EFCAB2</name>
    <name evidence="1" type="synonym">DRC8</name>
</gene>
<comment type="function">
    <text evidence="1">Component of the nexin-dynein regulatory complex (N-DRC), a key regulator of ciliary/flagellar motility which maintains the alignment and integrity of the distal axoneme and regulates microtubule sliding in motile axonemes.</text>
</comment>
<comment type="subunit">
    <text evidence="1">Component of the nexin-dynein regulatory complex (N-DRC).</text>
</comment>
<comment type="interaction">
    <interactant intactId="EBI-13317131">
        <id>Q5VUJ9-2</id>
    </interactant>
    <interactant intactId="EBI-713602">
        <id>Q9BQD7</id>
        <label>ANTKMT</label>
    </interactant>
    <organismsDiffer>false</organismsDiffer>
    <experiments>3</experiments>
</comment>
<comment type="interaction">
    <interactant intactId="EBI-13317131">
        <id>Q5VUJ9-2</id>
    </interactant>
    <interactant intactId="EBI-358272">
        <id>P52815</id>
        <label>MRPL12</label>
    </interactant>
    <organismsDiffer>false</organismsDiffer>
    <experiments>3</experiments>
</comment>
<comment type="interaction">
    <interactant intactId="EBI-13317131">
        <id>Q5VUJ9-2</id>
    </interactant>
    <interactant intactId="EBI-727338">
        <id>O95988</id>
        <label>TCL1B</label>
    </interactant>
    <organismsDiffer>false</organismsDiffer>
    <experiments>3</experiments>
</comment>
<comment type="interaction">
    <interactant intactId="EBI-13317131">
        <id>Q5VUJ9-2</id>
    </interactant>
    <interactant intactId="EBI-746692">
        <id>P19237</id>
        <label>TNNI1</label>
    </interactant>
    <organismsDiffer>false</organismsDiffer>
    <experiments>3</experiments>
</comment>
<comment type="interaction">
    <interactant intactId="EBI-13317131">
        <id>Q5VUJ9-2</id>
    </interactant>
    <interactant intactId="EBI-7746394">
        <id>P48788</id>
        <label>TNNI2</label>
    </interactant>
    <organismsDiffer>false</organismsDiffer>
    <experiments>3</experiments>
</comment>
<comment type="subcellular location">
    <subcellularLocation>
        <location evidence="1">Cytoplasm</location>
        <location evidence="1">Cytoskeleton</location>
        <location evidence="1">Flagellum axoneme</location>
    </subcellularLocation>
</comment>
<comment type="alternative products">
    <event type="alternative splicing"/>
    <isoform>
        <id>Q5VUJ9-1</id>
        <name>1</name>
        <sequence type="displayed"/>
    </isoform>
    <isoform>
        <id>Q5VUJ9-2</id>
        <name>2</name>
        <sequence type="described" ref="VSP_021055 VSP_021056 VSP_021057"/>
    </isoform>
    <isoform>
        <id>Q5VUJ9-3</id>
        <name>3</name>
        <sequence type="described" ref="VSP_043273 VSP_043274"/>
    </isoform>
</comment>
<comment type="similarity">
    <text evidence="6">Belongs to the DRC8 family.</text>
</comment>
<name>DRC8_HUMAN</name>
<protein>
    <recommendedName>
        <fullName evidence="1">Dynein regulatory complex protein 8</fullName>
    </recommendedName>
    <alternativeName>
        <fullName>EF-hand calcium-binding domain-containing protein 2</fullName>
    </alternativeName>
</protein>
<dbReference type="EMBL" id="AK090927">
    <property type="status" value="NOT_ANNOTATED_CDS"/>
    <property type="molecule type" value="mRNA"/>
</dbReference>
<dbReference type="EMBL" id="AK302883">
    <property type="protein sequence ID" value="BAG64061.1"/>
    <property type="molecule type" value="mRNA"/>
</dbReference>
<dbReference type="EMBL" id="AL356512">
    <property type="status" value="NOT_ANNOTATED_CDS"/>
    <property type="molecule type" value="Genomic_DNA"/>
</dbReference>
<dbReference type="EMBL" id="AL589763">
    <property type="status" value="NOT_ANNOTATED_CDS"/>
    <property type="molecule type" value="Genomic_DNA"/>
</dbReference>
<dbReference type="EMBL" id="BC005357">
    <property type="protein sequence ID" value="AAH05357.1"/>
    <property type="molecule type" value="mRNA"/>
</dbReference>
<dbReference type="EMBL" id="AB209286">
    <property type="protein sequence ID" value="BAD92523.1"/>
    <property type="molecule type" value="mRNA"/>
</dbReference>
<dbReference type="CCDS" id="CCDS31082.1">
    <molecule id="Q5VUJ9-2"/>
</dbReference>
<dbReference type="CCDS" id="CCDS44341.1">
    <molecule id="Q5VUJ9-3"/>
</dbReference>
<dbReference type="RefSeq" id="NP_001137415.1">
    <molecule id="Q5VUJ9-3"/>
    <property type="nucleotide sequence ID" value="NM_001143943.1"/>
</dbReference>
<dbReference type="RefSeq" id="NP_115704.1">
    <molecule id="Q5VUJ9-2"/>
    <property type="nucleotide sequence ID" value="NM_032328.4"/>
</dbReference>
<dbReference type="PDB" id="8J07">
    <property type="method" value="EM"/>
    <property type="resolution" value="4.10 A"/>
    <property type="chains" value="12/13/14/8=1-269"/>
</dbReference>
<dbReference type="PDBsum" id="8J07"/>
<dbReference type="EMDB" id="EMD-35888"/>
<dbReference type="SMR" id="Q5VUJ9"/>
<dbReference type="BioGRID" id="124015">
    <property type="interactions" value="19"/>
</dbReference>
<dbReference type="ComplexPortal" id="CPX-8086">
    <property type="entry name" value="Nexin-dynein regulatory complex"/>
</dbReference>
<dbReference type="FunCoup" id="Q5VUJ9">
    <property type="interactions" value="43"/>
</dbReference>
<dbReference type="IntAct" id="Q5VUJ9">
    <property type="interactions" value="12"/>
</dbReference>
<dbReference type="STRING" id="9606.ENSP00000355480"/>
<dbReference type="iPTMnet" id="Q5VUJ9"/>
<dbReference type="PhosphoSitePlus" id="Q5VUJ9"/>
<dbReference type="BioMuta" id="EFCAB2"/>
<dbReference type="DMDM" id="74756857"/>
<dbReference type="jPOST" id="Q5VUJ9"/>
<dbReference type="MassIVE" id="Q5VUJ9"/>
<dbReference type="PaxDb" id="9606-ENSP00000355480"/>
<dbReference type="PeptideAtlas" id="Q5VUJ9"/>
<dbReference type="ProteomicsDB" id="65421">
    <molecule id="Q5VUJ9-1"/>
</dbReference>
<dbReference type="ProteomicsDB" id="65422">
    <molecule id="Q5VUJ9-2"/>
</dbReference>
<dbReference type="ProteomicsDB" id="65423">
    <molecule id="Q5VUJ9-3"/>
</dbReference>
<dbReference type="Pumba" id="Q5VUJ9"/>
<dbReference type="Antibodypedia" id="34718">
    <property type="antibodies" value="23 antibodies from 10 providers"/>
</dbReference>
<dbReference type="DNASU" id="84288"/>
<dbReference type="Ensembl" id="ENST00000366523.6">
    <molecule id="Q5VUJ9-2"/>
    <property type="protein sequence ID" value="ENSP00000355480.1"/>
    <property type="gene ID" value="ENSG00000203666.13"/>
</dbReference>
<dbReference type="Ensembl" id="ENST00000447569.6">
    <molecule id="Q5VUJ9-3"/>
    <property type="protein sequence ID" value="ENSP00000408661.2"/>
    <property type="gene ID" value="ENSG00000203666.13"/>
</dbReference>
<dbReference type="GeneID" id="84288"/>
<dbReference type="KEGG" id="hsa:84288"/>
<dbReference type="MANE-Select" id="ENST00000366523.6">
    <molecule id="Q5VUJ9-2"/>
    <property type="protein sequence ID" value="ENSP00000355480.1"/>
    <property type="RefSeq nucleotide sequence ID" value="NM_032328.4"/>
    <property type="RefSeq protein sequence ID" value="NP_115704.1"/>
</dbReference>
<dbReference type="UCSC" id="uc001ibc.3">
    <molecule id="Q5VUJ9-1"/>
    <property type="organism name" value="human"/>
</dbReference>
<dbReference type="AGR" id="HGNC:28166"/>
<dbReference type="CTD" id="84288"/>
<dbReference type="DisGeNET" id="84288"/>
<dbReference type="GeneCards" id="EFCAB2"/>
<dbReference type="HGNC" id="HGNC:28166">
    <property type="gene designation" value="EFCAB2"/>
</dbReference>
<dbReference type="HPA" id="ENSG00000203666">
    <property type="expression patterns" value="Low tissue specificity"/>
</dbReference>
<dbReference type="MIM" id="619617">
    <property type="type" value="gene"/>
</dbReference>
<dbReference type="neXtProt" id="NX_Q5VUJ9"/>
<dbReference type="OpenTargets" id="ENSG00000203666"/>
<dbReference type="PharmGKB" id="PA142671914"/>
<dbReference type="VEuPathDB" id="HostDB:ENSG00000203666"/>
<dbReference type="eggNOG" id="KOG0027">
    <property type="taxonomic scope" value="Eukaryota"/>
</dbReference>
<dbReference type="GeneTree" id="ENSGT00940000160590"/>
<dbReference type="HOGENOM" id="CLU_061288_19_2_1"/>
<dbReference type="InParanoid" id="Q5VUJ9"/>
<dbReference type="OMA" id="MTKEGEP"/>
<dbReference type="OrthoDB" id="10260307at2759"/>
<dbReference type="PAN-GO" id="Q5VUJ9">
    <property type="GO annotations" value="1 GO annotation based on evolutionary models"/>
</dbReference>
<dbReference type="PhylomeDB" id="Q5VUJ9"/>
<dbReference type="TreeFam" id="TF324069"/>
<dbReference type="PathwayCommons" id="Q5VUJ9"/>
<dbReference type="SignaLink" id="Q5VUJ9"/>
<dbReference type="BioGRID-ORCS" id="84288">
    <property type="hits" value="15 hits in 1151 CRISPR screens"/>
</dbReference>
<dbReference type="ChiTaRS" id="EFCAB2">
    <property type="organism name" value="human"/>
</dbReference>
<dbReference type="GenomeRNAi" id="84288"/>
<dbReference type="Pharos" id="Q5VUJ9">
    <property type="development level" value="Tdark"/>
</dbReference>
<dbReference type="PRO" id="PR:Q5VUJ9"/>
<dbReference type="Proteomes" id="UP000005640">
    <property type="component" value="Chromosome 1"/>
</dbReference>
<dbReference type="RNAct" id="Q5VUJ9">
    <property type="molecule type" value="protein"/>
</dbReference>
<dbReference type="Bgee" id="ENSG00000203666">
    <property type="expression patterns" value="Expressed in right uterine tube and 182 other cell types or tissues"/>
</dbReference>
<dbReference type="ExpressionAtlas" id="Q5VUJ9">
    <property type="expression patterns" value="baseline and differential"/>
</dbReference>
<dbReference type="GO" id="GO:0005737">
    <property type="term" value="C:cytoplasm"/>
    <property type="evidence" value="ECO:0007669"/>
    <property type="project" value="UniProtKB-KW"/>
</dbReference>
<dbReference type="GO" id="GO:0005856">
    <property type="term" value="C:cytoskeleton"/>
    <property type="evidence" value="ECO:0007669"/>
    <property type="project" value="UniProtKB-KW"/>
</dbReference>
<dbReference type="GO" id="GO:0097228">
    <property type="term" value="C:sperm principal piece"/>
    <property type="evidence" value="ECO:0000318"/>
    <property type="project" value="GO_Central"/>
</dbReference>
<dbReference type="GO" id="GO:0005509">
    <property type="term" value="F:calcium ion binding"/>
    <property type="evidence" value="ECO:0007669"/>
    <property type="project" value="Ensembl"/>
</dbReference>
<dbReference type="CDD" id="cd00051">
    <property type="entry name" value="EFh"/>
    <property type="match status" value="1"/>
</dbReference>
<dbReference type="FunFam" id="1.10.238.10:FF:000178">
    <property type="entry name" value="Calmodulin-2 A"/>
    <property type="match status" value="1"/>
</dbReference>
<dbReference type="Gene3D" id="1.10.238.10">
    <property type="entry name" value="EF-hand"/>
    <property type="match status" value="1"/>
</dbReference>
<dbReference type="InterPro" id="IPR011992">
    <property type="entry name" value="EF-hand-dom_pair"/>
</dbReference>
<dbReference type="InterPro" id="IPR002048">
    <property type="entry name" value="EF_hand_dom"/>
</dbReference>
<dbReference type="PANTHER" id="PTHR46763">
    <property type="entry name" value="DYNEIN REGULATORY COMPLEX PROTEIN 8"/>
    <property type="match status" value="1"/>
</dbReference>
<dbReference type="PANTHER" id="PTHR46763:SF1">
    <property type="entry name" value="DYNEIN REGULATORY COMPLEX PROTEIN 8"/>
    <property type="match status" value="1"/>
</dbReference>
<dbReference type="SMART" id="SM00054">
    <property type="entry name" value="EFh"/>
    <property type="match status" value="2"/>
</dbReference>
<dbReference type="SUPFAM" id="SSF47473">
    <property type="entry name" value="EF-hand"/>
    <property type="match status" value="1"/>
</dbReference>
<dbReference type="PROSITE" id="PS50222">
    <property type="entry name" value="EF_HAND_2"/>
    <property type="match status" value="2"/>
</dbReference>
<accession>Q5VUJ9</accession>
<accession>B4DZE9</accession>
<accession>Q59G23</accession>
<accession>Q9BS36</accession>
<evidence type="ECO:0000250" key="1">
    <source>
        <dbReference type="UniProtKB" id="A8J3A0"/>
    </source>
</evidence>
<evidence type="ECO:0000255" key="2">
    <source>
        <dbReference type="PROSITE-ProRule" id="PRU00448"/>
    </source>
</evidence>
<evidence type="ECO:0000256" key="3">
    <source>
        <dbReference type="SAM" id="MobiDB-lite"/>
    </source>
</evidence>
<evidence type="ECO:0000303" key="4">
    <source>
    </source>
</evidence>
<evidence type="ECO:0000303" key="5">
    <source>
    </source>
</evidence>
<evidence type="ECO:0000305" key="6"/>
<organism>
    <name type="scientific">Homo sapiens</name>
    <name type="common">Human</name>
    <dbReference type="NCBI Taxonomy" id="9606"/>
    <lineage>
        <taxon>Eukaryota</taxon>
        <taxon>Metazoa</taxon>
        <taxon>Chordata</taxon>
        <taxon>Craniata</taxon>
        <taxon>Vertebrata</taxon>
        <taxon>Euteleostomi</taxon>
        <taxon>Mammalia</taxon>
        <taxon>Eutheria</taxon>
        <taxon>Euarchontoglires</taxon>
        <taxon>Primates</taxon>
        <taxon>Haplorrhini</taxon>
        <taxon>Catarrhini</taxon>
        <taxon>Hominidae</taxon>
        <taxon>Homo</taxon>
    </lineage>
</organism>